<evidence type="ECO:0000255" key="1">
    <source>
        <dbReference type="HAMAP-Rule" id="MF_00211"/>
    </source>
</evidence>
<gene>
    <name evidence="1" type="primary">trpD</name>
    <name type="ordered locus">NMA1164</name>
</gene>
<reference key="1">
    <citation type="journal article" date="2000" name="Nature">
        <title>Complete DNA sequence of a serogroup A strain of Neisseria meningitidis Z2491.</title>
        <authorList>
            <person name="Parkhill J."/>
            <person name="Achtman M."/>
            <person name="James K.D."/>
            <person name="Bentley S.D."/>
            <person name="Churcher C.M."/>
            <person name="Klee S.R."/>
            <person name="Morelli G."/>
            <person name="Basham D."/>
            <person name="Brown D."/>
            <person name="Chillingworth T."/>
            <person name="Davies R.M."/>
            <person name="Davis P."/>
            <person name="Devlin K."/>
            <person name="Feltwell T."/>
            <person name="Hamlin N."/>
            <person name="Holroyd S."/>
            <person name="Jagels K."/>
            <person name="Leather S."/>
            <person name="Moule S."/>
            <person name="Mungall K.L."/>
            <person name="Quail M.A."/>
            <person name="Rajandream M.A."/>
            <person name="Rutherford K.M."/>
            <person name="Simmonds M."/>
            <person name="Skelton J."/>
            <person name="Whitehead S."/>
            <person name="Spratt B.G."/>
            <person name="Barrell B.G."/>
        </authorList>
    </citation>
    <scope>NUCLEOTIDE SEQUENCE [LARGE SCALE GENOMIC DNA]</scope>
    <source>
        <strain>DSM 15465 / Z2491</strain>
    </source>
</reference>
<name>TRPD_NEIMA</name>
<protein>
    <recommendedName>
        <fullName evidence="1">Anthranilate phosphoribosyltransferase</fullName>
        <ecNumber evidence="1">2.4.2.18</ecNumber>
    </recommendedName>
</protein>
<keyword id="KW-0028">Amino-acid biosynthesis</keyword>
<keyword id="KW-0057">Aromatic amino acid biosynthesis</keyword>
<keyword id="KW-0328">Glycosyltransferase</keyword>
<keyword id="KW-0460">Magnesium</keyword>
<keyword id="KW-0479">Metal-binding</keyword>
<keyword id="KW-0808">Transferase</keyword>
<keyword id="KW-0822">Tryptophan biosynthesis</keyword>
<proteinExistence type="inferred from homology"/>
<feature type="chain" id="PRO_0000154463" description="Anthranilate phosphoribosyltransferase">
    <location>
        <begin position="1"/>
        <end position="352"/>
    </location>
</feature>
<feature type="binding site" evidence="1">
    <location>
        <position position="83"/>
    </location>
    <ligand>
        <name>5-phospho-alpha-D-ribose 1-diphosphate</name>
        <dbReference type="ChEBI" id="CHEBI:58017"/>
    </ligand>
</feature>
<feature type="binding site" evidence="1">
    <location>
        <position position="83"/>
    </location>
    <ligand>
        <name>anthranilate</name>
        <dbReference type="ChEBI" id="CHEBI:16567"/>
        <label>1</label>
    </ligand>
</feature>
<feature type="binding site" evidence="1">
    <location>
        <begin position="86"/>
        <end position="87"/>
    </location>
    <ligand>
        <name>5-phospho-alpha-D-ribose 1-diphosphate</name>
        <dbReference type="ChEBI" id="CHEBI:58017"/>
    </ligand>
</feature>
<feature type="binding site" evidence="1">
    <location>
        <position position="91"/>
    </location>
    <ligand>
        <name>5-phospho-alpha-D-ribose 1-diphosphate</name>
        <dbReference type="ChEBI" id="CHEBI:58017"/>
    </ligand>
</feature>
<feature type="binding site" evidence="1">
    <location>
        <begin position="93"/>
        <end position="96"/>
    </location>
    <ligand>
        <name>5-phospho-alpha-D-ribose 1-diphosphate</name>
        <dbReference type="ChEBI" id="CHEBI:58017"/>
    </ligand>
</feature>
<feature type="binding site" evidence="1">
    <location>
        <position position="95"/>
    </location>
    <ligand>
        <name>Mg(2+)</name>
        <dbReference type="ChEBI" id="CHEBI:18420"/>
        <label>1</label>
    </ligand>
</feature>
<feature type="binding site" evidence="1">
    <location>
        <begin position="111"/>
        <end position="119"/>
    </location>
    <ligand>
        <name>5-phospho-alpha-D-ribose 1-diphosphate</name>
        <dbReference type="ChEBI" id="CHEBI:58017"/>
    </ligand>
</feature>
<feature type="binding site" evidence="1">
    <location>
        <position position="123"/>
    </location>
    <ligand>
        <name>5-phospho-alpha-D-ribose 1-diphosphate</name>
        <dbReference type="ChEBI" id="CHEBI:58017"/>
    </ligand>
</feature>
<feature type="binding site" evidence="1">
    <location>
        <position position="169"/>
    </location>
    <ligand>
        <name>anthranilate</name>
        <dbReference type="ChEBI" id="CHEBI:16567"/>
        <label>2</label>
    </ligand>
</feature>
<feature type="binding site" evidence="1">
    <location>
        <position position="228"/>
    </location>
    <ligand>
        <name>Mg(2+)</name>
        <dbReference type="ChEBI" id="CHEBI:18420"/>
        <label>2</label>
    </ligand>
</feature>
<feature type="binding site" evidence="1">
    <location>
        <position position="229"/>
    </location>
    <ligand>
        <name>Mg(2+)</name>
        <dbReference type="ChEBI" id="CHEBI:18420"/>
        <label>1</label>
    </ligand>
</feature>
<feature type="binding site" evidence="1">
    <location>
        <position position="229"/>
    </location>
    <ligand>
        <name>Mg(2+)</name>
        <dbReference type="ChEBI" id="CHEBI:18420"/>
        <label>2</label>
    </ligand>
</feature>
<sequence length="352" mass="37698">MITPQQAIERLISNNELFYDEMTDLMRQIMRGQVLPEQIAAILTGLRIKVETVSEITAAAAVMREFATKVPLENAEGLVDIVGTGGDGAKTFNISTTSMFVAAAAGAKVAKHGGRSVSSSSGAADVVEQMGANLNLTPEQVAQSIRQTGIGFMFAPNHHSAMRHVAPVRRSLGFRSIFNILGPLTNPAGAPNQLLGVFHTDLCGILSRVLQQLGSKHVLVVCGEGGLDEITLTGKTRVAELKDGKISEYDIRPEDFGIETRRNLDEIKVANTQESLLKMNEVLEGREGAARDIVLLNTAAALYAGNVAASLSDGISAAREAIDSGRAKSKKEEFVGFQPQQRCHFLGKMELG</sequence>
<organism>
    <name type="scientific">Neisseria meningitidis serogroup A / serotype 4A (strain DSM 15465 / Z2491)</name>
    <dbReference type="NCBI Taxonomy" id="122587"/>
    <lineage>
        <taxon>Bacteria</taxon>
        <taxon>Pseudomonadati</taxon>
        <taxon>Pseudomonadota</taxon>
        <taxon>Betaproteobacteria</taxon>
        <taxon>Neisseriales</taxon>
        <taxon>Neisseriaceae</taxon>
        <taxon>Neisseria</taxon>
    </lineage>
</organism>
<comment type="function">
    <text evidence="1">Catalyzes the transfer of the phosphoribosyl group of 5-phosphorylribose-1-pyrophosphate (PRPP) to anthranilate to yield N-(5'-phosphoribosyl)-anthranilate (PRA).</text>
</comment>
<comment type="catalytic activity">
    <reaction evidence="1">
        <text>N-(5-phospho-beta-D-ribosyl)anthranilate + diphosphate = 5-phospho-alpha-D-ribose 1-diphosphate + anthranilate</text>
        <dbReference type="Rhea" id="RHEA:11768"/>
        <dbReference type="ChEBI" id="CHEBI:16567"/>
        <dbReference type="ChEBI" id="CHEBI:18277"/>
        <dbReference type="ChEBI" id="CHEBI:33019"/>
        <dbReference type="ChEBI" id="CHEBI:58017"/>
        <dbReference type="EC" id="2.4.2.18"/>
    </reaction>
</comment>
<comment type="cofactor">
    <cofactor evidence="1">
        <name>Mg(2+)</name>
        <dbReference type="ChEBI" id="CHEBI:18420"/>
    </cofactor>
    <text evidence="1">Binds 2 magnesium ions per monomer.</text>
</comment>
<comment type="pathway">
    <text evidence="1">Amino-acid biosynthesis; L-tryptophan biosynthesis; L-tryptophan from chorismate: step 2/5.</text>
</comment>
<comment type="subunit">
    <text evidence="1">Homodimer.</text>
</comment>
<comment type="similarity">
    <text evidence="1">Belongs to the anthranilate phosphoribosyltransferase family.</text>
</comment>
<accession>P66994</accession>
<accession>A1IRI3</accession>
<accession>Q9JQM3</accession>
<dbReference type="EC" id="2.4.2.18" evidence="1"/>
<dbReference type="EMBL" id="AL157959">
    <property type="protein sequence ID" value="CAM08369.1"/>
    <property type="molecule type" value="Genomic_DNA"/>
</dbReference>
<dbReference type="RefSeq" id="WP_002217365.1">
    <property type="nucleotide sequence ID" value="NC_003116.1"/>
</dbReference>
<dbReference type="SMR" id="P66994"/>
<dbReference type="EnsemblBacteria" id="CAM08369">
    <property type="protein sequence ID" value="CAM08369"/>
    <property type="gene ID" value="NMA1164"/>
</dbReference>
<dbReference type="KEGG" id="nma:NMA1164"/>
<dbReference type="HOGENOM" id="CLU_034315_2_1_4"/>
<dbReference type="UniPathway" id="UPA00035">
    <property type="reaction ID" value="UER00041"/>
</dbReference>
<dbReference type="Proteomes" id="UP000000626">
    <property type="component" value="Chromosome"/>
</dbReference>
<dbReference type="GO" id="GO:0005829">
    <property type="term" value="C:cytosol"/>
    <property type="evidence" value="ECO:0007669"/>
    <property type="project" value="TreeGrafter"/>
</dbReference>
<dbReference type="GO" id="GO:0004048">
    <property type="term" value="F:anthranilate phosphoribosyltransferase activity"/>
    <property type="evidence" value="ECO:0007669"/>
    <property type="project" value="UniProtKB-UniRule"/>
</dbReference>
<dbReference type="GO" id="GO:0000287">
    <property type="term" value="F:magnesium ion binding"/>
    <property type="evidence" value="ECO:0007669"/>
    <property type="project" value="UniProtKB-UniRule"/>
</dbReference>
<dbReference type="GO" id="GO:0000162">
    <property type="term" value="P:L-tryptophan biosynthetic process"/>
    <property type="evidence" value="ECO:0007669"/>
    <property type="project" value="UniProtKB-UniRule"/>
</dbReference>
<dbReference type="FunFam" id="1.20.970.10:FF:000006">
    <property type="entry name" value="Anthranilate phosphoribosyltransferase"/>
    <property type="match status" value="1"/>
</dbReference>
<dbReference type="FunFam" id="3.40.1030.10:FF:000002">
    <property type="entry name" value="Anthranilate phosphoribosyltransferase"/>
    <property type="match status" value="1"/>
</dbReference>
<dbReference type="Gene3D" id="3.40.1030.10">
    <property type="entry name" value="Nucleoside phosphorylase/phosphoribosyltransferase catalytic domain"/>
    <property type="match status" value="1"/>
</dbReference>
<dbReference type="Gene3D" id="1.20.970.10">
    <property type="entry name" value="Transferase, Pyrimidine Nucleoside Phosphorylase, Chain C"/>
    <property type="match status" value="1"/>
</dbReference>
<dbReference type="HAMAP" id="MF_00211">
    <property type="entry name" value="TrpD"/>
    <property type="match status" value="1"/>
</dbReference>
<dbReference type="InterPro" id="IPR005940">
    <property type="entry name" value="Anthranilate_Pribosyl_Tfrase"/>
</dbReference>
<dbReference type="InterPro" id="IPR000312">
    <property type="entry name" value="Glycosyl_Trfase_fam3"/>
</dbReference>
<dbReference type="InterPro" id="IPR017459">
    <property type="entry name" value="Glycosyl_Trfase_fam3_N_dom"/>
</dbReference>
<dbReference type="InterPro" id="IPR036320">
    <property type="entry name" value="Glycosyl_Trfase_fam3_N_dom_sf"/>
</dbReference>
<dbReference type="InterPro" id="IPR035902">
    <property type="entry name" value="Nuc_phospho_transferase"/>
</dbReference>
<dbReference type="NCBIfam" id="TIGR01245">
    <property type="entry name" value="trpD"/>
    <property type="match status" value="1"/>
</dbReference>
<dbReference type="PANTHER" id="PTHR43285">
    <property type="entry name" value="ANTHRANILATE PHOSPHORIBOSYLTRANSFERASE"/>
    <property type="match status" value="1"/>
</dbReference>
<dbReference type="PANTHER" id="PTHR43285:SF2">
    <property type="entry name" value="ANTHRANILATE PHOSPHORIBOSYLTRANSFERASE"/>
    <property type="match status" value="1"/>
</dbReference>
<dbReference type="Pfam" id="PF02885">
    <property type="entry name" value="Glycos_trans_3N"/>
    <property type="match status" value="1"/>
</dbReference>
<dbReference type="Pfam" id="PF00591">
    <property type="entry name" value="Glycos_transf_3"/>
    <property type="match status" value="1"/>
</dbReference>
<dbReference type="SUPFAM" id="SSF52418">
    <property type="entry name" value="Nucleoside phosphorylase/phosphoribosyltransferase catalytic domain"/>
    <property type="match status" value="1"/>
</dbReference>
<dbReference type="SUPFAM" id="SSF47648">
    <property type="entry name" value="Nucleoside phosphorylase/phosphoribosyltransferase N-terminal domain"/>
    <property type="match status" value="1"/>
</dbReference>